<feature type="chain" id="PRO_0000316094" description="GMP synthase [glutamine-hydrolyzing] subunit A">
    <location>
        <begin position="1"/>
        <end position="189"/>
    </location>
</feature>
<feature type="domain" description="Glutamine amidotransferase type-1" evidence="1">
    <location>
        <begin position="1"/>
        <end position="189"/>
    </location>
</feature>
<feature type="active site" description="Nucleophile" evidence="1">
    <location>
        <position position="76"/>
    </location>
</feature>
<feature type="active site" evidence="1">
    <location>
        <position position="163"/>
    </location>
</feature>
<feature type="active site" evidence="1">
    <location>
        <position position="165"/>
    </location>
</feature>
<protein>
    <recommendedName>
        <fullName evidence="1">GMP synthase [glutamine-hydrolyzing] subunit A</fullName>
        <ecNumber evidence="1">6.3.5.2</ecNumber>
    </recommendedName>
    <alternativeName>
        <fullName evidence="1">Glutamine amidotransferase</fullName>
    </alternativeName>
</protein>
<gene>
    <name evidence="1" type="primary">guaAA</name>
    <name type="ordered locus">MmarC5_0133</name>
</gene>
<evidence type="ECO:0000255" key="1">
    <source>
        <dbReference type="HAMAP-Rule" id="MF_01510"/>
    </source>
</evidence>
<reference key="1">
    <citation type="submission" date="2007-03" db="EMBL/GenBank/DDBJ databases">
        <title>Complete sequence of chromosome of Methanococcus maripaludis C5.</title>
        <authorList>
            <consortium name="US DOE Joint Genome Institute"/>
            <person name="Copeland A."/>
            <person name="Lucas S."/>
            <person name="Lapidus A."/>
            <person name="Barry K."/>
            <person name="Glavina del Rio T."/>
            <person name="Dalin E."/>
            <person name="Tice H."/>
            <person name="Pitluck S."/>
            <person name="Chertkov O."/>
            <person name="Brettin T."/>
            <person name="Bruce D."/>
            <person name="Han C."/>
            <person name="Detter J.C."/>
            <person name="Schmutz J."/>
            <person name="Larimer F."/>
            <person name="Land M."/>
            <person name="Hauser L."/>
            <person name="Kyrpides N."/>
            <person name="Mikhailova N."/>
            <person name="Sieprawska-Lupa M."/>
            <person name="Whitman W.B."/>
            <person name="Richardson P."/>
        </authorList>
    </citation>
    <scope>NUCLEOTIDE SEQUENCE [LARGE SCALE GENOMIC DNA]</scope>
    <source>
        <strain>C5 / ATCC BAA-1333</strain>
    </source>
</reference>
<accession>A4FW79</accession>
<name>GUAAA_METM5</name>
<comment type="function">
    <text evidence="1">Catalyzes the synthesis of GMP from XMP.</text>
</comment>
<comment type="catalytic activity">
    <reaction evidence="1">
        <text>XMP + L-glutamine + ATP + H2O = GMP + L-glutamate + AMP + diphosphate + 2 H(+)</text>
        <dbReference type="Rhea" id="RHEA:11680"/>
        <dbReference type="ChEBI" id="CHEBI:15377"/>
        <dbReference type="ChEBI" id="CHEBI:15378"/>
        <dbReference type="ChEBI" id="CHEBI:29985"/>
        <dbReference type="ChEBI" id="CHEBI:30616"/>
        <dbReference type="ChEBI" id="CHEBI:33019"/>
        <dbReference type="ChEBI" id="CHEBI:57464"/>
        <dbReference type="ChEBI" id="CHEBI:58115"/>
        <dbReference type="ChEBI" id="CHEBI:58359"/>
        <dbReference type="ChEBI" id="CHEBI:456215"/>
        <dbReference type="EC" id="6.3.5.2"/>
    </reaction>
</comment>
<comment type="pathway">
    <text evidence="1">Purine metabolism; GMP biosynthesis; GMP from XMP (L-Gln route): step 1/1.</text>
</comment>
<comment type="subunit">
    <text evidence="1">Heterodimer composed of a glutamine amidotransferase subunit (A) and a GMP-binding subunit (B).</text>
</comment>
<sequence length="189" mass="21016">MIVILNNGGQYVHRIQRSLKYLDVPAKIIPNSTTLEEIIADSEIKGIILSGGPDITKATNCENIALNSELPVLGICLGHQLISKAYGGEVSRADSEEYASIKIYVKEENDLFNGVPSEFTAWASHMDEVKVIPDCFEVLAYSDICGIESIKHKEKSIYGVQFHPEVSHTEYGDVILKNFCKKCGFEFEE</sequence>
<proteinExistence type="inferred from homology"/>
<keyword id="KW-0067">ATP-binding</keyword>
<keyword id="KW-0315">Glutamine amidotransferase</keyword>
<keyword id="KW-0332">GMP biosynthesis</keyword>
<keyword id="KW-0436">Ligase</keyword>
<keyword id="KW-0547">Nucleotide-binding</keyword>
<keyword id="KW-0658">Purine biosynthesis</keyword>
<organism>
    <name type="scientific">Methanococcus maripaludis (strain C5 / ATCC BAA-1333)</name>
    <dbReference type="NCBI Taxonomy" id="402880"/>
    <lineage>
        <taxon>Archaea</taxon>
        <taxon>Methanobacteriati</taxon>
        <taxon>Methanobacteriota</taxon>
        <taxon>Methanomada group</taxon>
        <taxon>Methanococci</taxon>
        <taxon>Methanococcales</taxon>
        <taxon>Methanococcaceae</taxon>
        <taxon>Methanococcus</taxon>
    </lineage>
</organism>
<dbReference type="EC" id="6.3.5.2" evidence="1"/>
<dbReference type="EMBL" id="CP000609">
    <property type="protein sequence ID" value="ABO34450.1"/>
    <property type="molecule type" value="Genomic_DNA"/>
</dbReference>
<dbReference type="RefSeq" id="WP_011867910.1">
    <property type="nucleotide sequence ID" value="NC_009135.1"/>
</dbReference>
<dbReference type="SMR" id="A4FW79"/>
<dbReference type="STRING" id="402880.MmarC5_0133"/>
<dbReference type="GeneID" id="4927747"/>
<dbReference type="KEGG" id="mmq:MmarC5_0133"/>
<dbReference type="eggNOG" id="arCOG00087">
    <property type="taxonomic scope" value="Archaea"/>
</dbReference>
<dbReference type="HOGENOM" id="CLU_014340_1_4_2"/>
<dbReference type="OrthoDB" id="10772at2157"/>
<dbReference type="UniPathway" id="UPA00189">
    <property type="reaction ID" value="UER00296"/>
</dbReference>
<dbReference type="Proteomes" id="UP000000253">
    <property type="component" value="Chromosome"/>
</dbReference>
<dbReference type="GO" id="GO:0005829">
    <property type="term" value="C:cytosol"/>
    <property type="evidence" value="ECO:0007669"/>
    <property type="project" value="TreeGrafter"/>
</dbReference>
<dbReference type="GO" id="GO:0005524">
    <property type="term" value="F:ATP binding"/>
    <property type="evidence" value="ECO:0007669"/>
    <property type="project" value="UniProtKB-KW"/>
</dbReference>
<dbReference type="GO" id="GO:0003921">
    <property type="term" value="F:GMP synthase activity"/>
    <property type="evidence" value="ECO:0007669"/>
    <property type="project" value="TreeGrafter"/>
</dbReference>
<dbReference type="CDD" id="cd01742">
    <property type="entry name" value="GATase1_GMP_Synthase"/>
    <property type="match status" value="1"/>
</dbReference>
<dbReference type="FunFam" id="3.40.50.880:FF:000047">
    <property type="entry name" value="GMP synthase [glutamine-hydrolyzing] subunit A"/>
    <property type="match status" value="1"/>
</dbReference>
<dbReference type="Gene3D" id="3.40.50.880">
    <property type="match status" value="1"/>
</dbReference>
<dbReference type="HAMAP" id="MF_01510">
    <property type="entry name" value="GMP_synthase_A"/>
    <property type="match status" value="1"/>
</dbReference>
<dbReference type="InterPro" id="IPR029062">
    <property type="entry name" value="Class_I_gatase-like"/>
</dbReference>
<dbReference type="InterPro" id="IPR017926">
    <property type="entry name" value="GATASE"/>
</dbReference>
<dbReference type="InterPro" id="IPR004739">
    <property type="entry name" value="GMP_synth_GATase"/>
</dbReference>
<dbReference type="InterPro" id="IPR023686">
    <property type="entry name" value="GMP_synthase_A"/>
</dbReference>
<dbReference type="NCBIfam" id="TIGR00888">
    <property type="entry name" value="guaA_Nterm"/>
    <property type="match status" value="1"/>
</dbReference>
<dbReference type="NCBIfam" id="NF001975">
    <property type="entry name" value="PRK00758.1"/>
    <property type="match status" value="1"/>
</dbReference>
<dbReference type="PANTHER" id="PTHR11922:SF2">
    <property type="entry name" value="GMP SYNTHASE [GLUTAMINE-HYDROLYZING]"/>
    <property type="match status" value="1"/>
</dbReference>
<dbReference type="PANTHER" id="PTHR11922">
    <property type="entry name" value="GMP SYNTHASE-RELATED"/>
    <property type="match status" value="1"/>
</dbReference>
<dbReference type="Pfam" id="PF00117">
    <property type="entry name" value="GATase"/>
    <property type="match status" value="1"/>
</dbReference>
<dbReference type="PRINTS" id="PR00097">
    <property type="entry name" value="ANTSNTHASEII"/>
</dbReference>
<dbReference type="PRINTS" id="PR00096">
    <property type="entry name" value="GATASE"/>
</dbReference>
<dbReference type="SUPFAM" id="SSF52317">
    <property type="entry name" value="Class I glutamine amidotransferase-like"/>
    <property type="match status" value="1"/>
</dbReference>
<dbReference type="PROSITE" id="PS51273">
    <property type="entry name" value="GATASE_TYPE_1"/>
    <property type="match status" value="1"/>
</dbReference>